<comment type="function">
    <text evidence="1">Component of the acetyl coenzyme A carboxylase (ACC) complex. First, biotin carboxylase catalyzes the carboxylation of biotin on its carrier protein (BCCP) and then the CO(2) group is transferred by the carboxyltransferase to acetyl-CoA to form malonyl-CoA.</text>
</comment>
<comment type="catalytic activity">
    <reaction evidence="1">
        <text>N(6)-carboxybiotinyl-L-lysyl-[protein] + acetyl-CoA = N(6)-biotinyl-L-lysyl-[protein] + malonyl-CoA</text>
        <dbReference type="Rhea" id="RHEA:54728"/>
        <dbReference type="Rhea" id="RHEA-COMP:10505"/>
        <dbReference type="Rhea" id="RHEA-COMP:10506"/>
        <dbReference type="ChEBI" id="CHEBI:57288"/>
        <dbReference type="ChEBI" id="CHEBI:57384"/>
        <dbReference type="ChEBI" id="CHEBI:83144"/>
        <dbReference type="ChEBI" id="CHEBI:83145"/>
        <dbReference type="EC" id="2.1.3.15"/>
    </reaction>
</comment>
<comment type="pathway">
    <text evidence="1">Lipid metabolism; malonyl-CoA biosynthesis; malonyl-CoA from acetyl-CoA: step 1/1.</text>
</comment>
<comment type="subunit">
    <text evidence="1">Acetyl-CoA carboxylase is a heterohexamer composed of biotin carboxyl carrier protein (AccB), biotin carboxylase (AccC) and two subunits each of ACCase subunit alpha (AccA) and ACCase subunit beta (AccD).</text>
</comment>
<comment type="subcellular location">
    <subcellularLocation>
        <location evidence="1">Cytoplasm</location>
    </subcellularLocation>
</comment>
<comment type="similarity">
    <text evidence="1">Belongs to the AccA family.</text>
</comment>
<reference key="1">
    <citation type="journal article" date="2002" name="Environ. Microbiol.">
        <title>Complete genome sequence and comparative analysis of the metabolically versatile Pseudomonas putida KT2440.</title>
        <authorList>
            <person name="Nelson K.E."/>
            <person name="Weinel C."/>
            <person name="Paulsen I.T."/>
            <person name="Dodson R.J."/>
            <person name="Hilbert H."/>
            <person name="Martins dos Santos V.A.P."/>
            <person name="Fouts D.E."/>
            <person name="Gill S.R."/>
            <person name="Pop M."/>
            <person name="Holmes M."/>
            <person name="Brinkac L.M."/>
            <person name="Beanan M.J."/>
            <person name="DeBoy R.T."/>
            <person name="Daugherty S.C."/>
            <person name="Kolonay J.F."/>
            <person name="Madupu R."/>
            <person name="Nelson W.C."/>
            <person name="White O."/>
            <person name="Peterson J.D."/>
            <person name="Khouri H.M."/>
            <person name="Hance I."/>
            <person name="Chris Lee P."/>
            <person name="Holtzapple E.K."/>
            <person name="Scanlan D."/>
            <person name="Tran K."/>
            <person name="Moazzez A."/>
            <person name="Utterback T.R."/>
            <person name="Rizzo M."/>
            <person name="Lee K."/>
            <person name="Kosack D."/>
            <person name="Moestl D."/>
            <person name="Wedler H."/>
            <person name="Lauber J."/>
            <person name="Stjepandic D."/>
            <person name="Hoheisel J."/>
            <person name="Straetz M."/>
            <person name="Heim S."/>
            <person name="Kiewitz C."/>
            <person name="Eisen J.A."/>
            <person name="Timmis K.N."/>
            <person name="Duesterhoeft A."/>
            <person name="Tuemmler B."/>
            <person name="Fraser C.M."/>
        </authorList>
    </citation>
    <scope>NUCLEOTIDE SEQUENCE [LARGE SCALE GENOMIC DNA]</scope>
    <source>
        <strain>ATCC 47054 / DSM 6125 / CFBP 8728 / NCIMB 11950 / KT2440</strain>
    </source>
</reference>
<organism>
    <name type="scientific">Pseudomonas putida (strain ATCC 47054 / DSM 6125 / CFBP 8728 / NCIMB 11950 / KT2440)</name>
    <dbReference type="NCBI Taxonomy" id="160488"/>
    <lineage>
        <taxon>Bacteria</taxon>
        <taxon>Pseudomonadati</taxon>
        <taxon>Pseudomonadota</taxon>
        <taxon>Gammaproteobacteria</taxon>
        <taxon>Pseudomonadales</taxon>
        <taxon>Pseudomonadaceae</taxon>
        <taxon>Pseudomonas</taxon>
    </lineage>
</organism>
<keyword id="KW-0067">ATP-binding</keyword>
<keyword id="KW-0963">Cytoplasm</keyword>
<keyword id="KW-0275">Fatty acid biosynthesis</keyword>
<keyword id="KW-0276">Fatty acid metabolism</keyword>
<keyword id="KW-0444">Lipid biosynthesis</keyword>
<keyword id="KW-0443">Lipid metabolism</keyword>
<keyword id="KW-0547">Nucleotide-binding</keyword>
<keyword id="KW-1185">Reference proteome</keyword>
<keyword id="KW-0808">Transferase</keyword>
<accession>Q88MG4</accession>
<dbReference type="EC" id="2.1.3.15" evidence="1"/>
<dbReference type="EMBL" id="AE015451">
    <property type="protein sequence ID" value="AAN67228.1"/>
    <property type="molecule type" value="Genomic_DNA"/>
</dbReference>
<dbReference type="RefSeq" id="NP_743764.1">
    <property type="nucleotide sequence ID" value="NC_002947.4"/>
</dbReference>
<dbReference type="RefSeq" id="WP_003252323.1">
    <property type="nucleotide sequence ID" value="NZ_CP169744.1"/>
</dbReference>
<dbReference type="SMR" id="Q88MG4"/>
<dbReference type="STRING" id="160488.PP_1607"/>
<dbReference type="PaxDb" id="160488-PP_1607"/>
<dbReference type="KEGG" id="ppu:PP_1607"/>
<dbReference type="PATRIC" id="fig|160488.4.peg.1698"/>
<dbReference type="eggNOG" id="COG0825">
    <property type="taxonomic scope" value="Bacteria"/>
</dbReference>
<dbReference type="HOGENOM" id="CLU_015486_0_2_6"/>
<dbReference type="OrthoDB" id="9808023at2"/>
<dbReference type="PhylomeDB" id="Q88MG4"/>
<dbReference type="BioCyc" id="PPUT160488:G1G01-1704-MONOMER"/>
<dbReference type="UniPathway" id="UPA00655">
    <property type="reaction ID" value="UER00711"/>
</dbReference>
<dbReference type="Proteomes" id="UP000000556">
    <property type="component" value="Chromosome"/>
</dbReference>
<dbReference type="GO" id="GO:0009317">
    <property type="term" value="C:acetyl-CoA carboxylase complex"/>
    <property type="evidence" value="ECO:0007669"/>
    <property type="project" value="InterPro"/>
</dbReference>
<dbReference type="GO" id="GO:0003989">
    <property type="term" value="F:acetyl-CoA carboxylase activity"/>
    <property type="evidence" value="ECO:0007669"/>
    <property type="project" value="InterPro"/>
</dbReference>
<dbReference type="GO" id="GO:0005524">
    <property type="term" value="F:ATP binding"/>
    <property type="evidence" value="ECO:0007669"/>
    <property type="project" value="UniProtKB-KW"/>
</dbReference>
<dbReference type="GO" id="GO:0016743">
    <property type="term" value="F:carboxyl- or carbamoyltransferase activity"/>
    <property type="evidence" value="ECO:0007669"/>
    <property type="project" value="UniProtKB-UniRule"/>
</dbReference>
<dbReference type="GO" id="GO:0006633">
    <property type="term" value="P:fatty acid biosynthetic process"/>
    <property type="evidence" value="ECO:0007669"/>
    <property type="project" value="UniProtKB-KW"/>
</dbReference>
<dbReference type="GO" id="GO:2001295">
    <property type="term" value="P:malonyl-CoA biosynthetic process"/>
    <property type="evidence" value="ECO:0007669"/>
    <property type="project" value="UniProtKB-UniRule"/>
</dbReference>
<dbReference type="FunFam" id="3.90.226.10:FF:000008">
    <property type="entry name" value="Acetyl-coenzyme A carboxylase carboxyl transferase subunit alpha"/>
    <property type="match status" value="1"/>
</dbReference>
<dbReference type="Gene3D" id="3.90.226.10">
    <property type="entry name" value="2-enoyl-CoA Hydratase, Chain A, domain 1"/>
    <property type="match status" value="1"/>
</dbReference>
<dbReference type="HAMAP" id="MF_00823">
    <property type="entry name" value="AcetylCoA_CT_alpha"/>
    <property type="match status" value="1"/>
</dbReference>
<dbReference type="InterPro" id="IPR001095">
    <property type="entry name" value="Acetyl_CoA_COase_a_su"/>
</dbReference>
<dbReference type="InterPro" id="IPR029045">
    <property type="entry name" value="ClpP/crotonase-like_dom_sf"/>
</dbReference>
<dbReference type="InterPro" id="IPR011763">
    <property type="entry name" value="COA_CT_C"/>
</dbReference>
<dbReference type="NCBIfam" id="TIGR00513">
    <property type="entry name" value="accA"/>
    <property type="match status" value="1"/>
</dbReference>
<dbReference type="NCBIfam" id="NF041504">
    <property type="entry name" value="AccA_sub"/>
    <property type="match status" value="1"/>
</dbReference>
<dbReference type="NCBIfam" id="NF004344">
    <property type="entry name" value="PRK05724.1"/>
    <property type="match status" value="1"/>
</dbReference>
<dbReference type="PANTHER" id="PTHR42853">
    <property type="entry name" value="ACETYL-COENZYME A CARBOXYLASE CARBOXYL TRANSFERASE SUBUNIT ALPHA"/>
    <property type="match status" value="1"/>
</dbReference>
<dbReference type="PANTHER" id="PTHR42853:SF3">
    <property type="entry name" value="ACETYL-COENZYME A CARBOXYLASE CARBOXYL TRANSFERASE SUBUNIT ALPHA, CHLOROPLASTIC"/>
    <property type="match status" value="1"/>
</dbReference>
<dbReference type="Pfam" id="PF03255">
    <property type="entry name" value="ACCA"/>
    <property type="match status" value="1"/>
</dbReference>
<dbReference type="PRINTS" id="PR01069">
    <property type="entry name" value="ACCCTRFRASEA"/>
</dbReference>
<dbReference type="SUPFAM" id="SSF52096">
    <property type="entry name" value="ClpP/crotonase"/>
    <property type="match status" value="1"/>
</dbReference>
<dbReference type="PROSITE" id="PS50989">
    <property type="entry name" value="COA_CT_CTER"/>
    <property type="match status" value="1"/>
</dbReference>
<proteinExistence type="inferred from homology"/>
<name>ACCA_PSEPK</name>
<gene>
    <name evidence="1" type="primary">accA</name>
    <name type="ordered locus">PP_1607</name>
</gene>
<protein>
    <recommendedName>
        <fullName evidence="1">Acetyl-coenzyme A carboxylase carboxyl transferase subunit alpha</fullName>
        <shortName evidence="1">ACCase subunit alpha</shortName>
        <shortName evidence="1">Acetyl-CoA carboxylase carboxyltransferase subunit alpha</shortName>
        <ecNumber evidence="1">2.1.3.15</ecNumber>
    </recommendedName>
</protein>
<feature type="chain" id="PRO_0000223809" description="Acetyl-coenzyme A carboxylase carboxyl transferase subunit alpha">
    <location>
        <begin position="1"/>
        <end position="315"/>
    </location>
</feature>
<feature type="domain" description="CoA carboxyltransferase C-terminal" evidence="2">
    <location>
        <begin position="32"/>
        <end position="293"/>
    </location>
</feature>
<evidence type="ECO:0000255" key="1">
    <source>
        <dbReference type="HAMAP-Rule" id="MF_00823"/>
    </source>
</evidence>
<evidence type="ECO:0000255" key="2">
    <source>
        <dbReference type="PROSITE-ProRule" id="PRU01137"/>
    </source>
</evidence>
<sequence length="315" mass="35135">MNPNFLDFEQPIADLQAKIEGLRLVGNDNSLNISDEIARLQDKSNTLTESIFGNLTSWQIARLARHPRRPYTLDYLEHIFTEFEELHGDRHFSDDAAIVGGTARLDGKPVMVIGHQKGREVREKVRRNFGMPRPEGYRKACRLMEMAERFKMPILTFIDTPGAYPGIDAEERNQSEAIAWNLRVMARLKTPIIATVIGEGGSGGALAIGVCDQLNMLQYSTYSVISPEGCASILWKTADKAADAAEAMGITAERLKSLNIVDKVIQEPLGGAHRDPAKMSESIRADLVQQLDMLGKFDNDALLARRYERLMSYGL</sequence>